<keyword id="KW-0028">Amino-acid biosynthesis</keyword>
<keyword id="KW-0479">Metal-binding</keyword>
<keyword id="KW-0486">Methionine biosynthesis</keyword>
<keyword id="KW-0489">Methyltransferase</keyword>
<keyword id="KW-0677">Repeat</keyword>
<keyword id="KW-0808">Transferase</keyword>
<keyword id="KW-0862">Zinc</keyword>
<sequence length="792" mass="88084">MARTHILGFPRIGERRELKFAQEAFWRGDRTEAELRDVAAQLRRRHWQLQADRGLDTVATGDFAYYDQMLSLTALLGALPRRFGLDPARLTLTQYFELARGNREQPAMEMTKWFDTNYHYLVPELDAETTFDGGPAWFFEEADEALALGLRARPVLIGPVTYLWLSKSHVAGFDRLALLPQLLQGYRRILDQLKARGIEWVQIDEPALCLDLEPAWLDAFDTAYAALREAGPKLLLATYFDTAADHAQRAAALPVDGFHIDLVRAPEQLAAWQAALPAHAVLSLGVIDGRNIWRTDLRRVLDTLRPVQAALGERLWLAPSCSLLHVPVSLAHEVRLDVELKSWLAFATEKLDELSVLGRALNQSDAVVAEALAASDAAQASRRASRRVVKPRVQQRLAAVSAGMADRASPFAERIERQRQALQLPLLPTTTIGSFPQTAAIRQTRAAFKRGEIGALEYLERIRAEIAVAVRKQEALGLDVLVHGEAERNDMVEYFGEQLCGYGFTENGWVQSYGSRCVKPPVIYGDVYRPEPMTVDTARYAQSLTERPMKGMLTGPITMLQWSFVRDDQPRATTARQLALAIRDEVCDLEQAGIRVIQIDEPALREGLPLRRADWDAYLDWAVTAFRLSASGVQDQTQIHTHMCYAEFNDILPAIAAMDADVITIETSRSAMELLEGFGDFDYPNEIGPGVYDIHSPRVPSVQAMERLLDRACEVVPPQRLWVNPDCGLKTRGWEETEAALANMVSAARALRARLSARGATTWKRLSKPAAATAAAVPHAGNACTACATHAN</sequence>
<dbReference type="EC" id="2.1.1.14" evidence="1"/>
<dbReference type="EMBL" id="AF042280">
    <property type="protein sequence ID" value="AAG42027.1"/>
    <property type="molecule type" value="Genomic_DNA"/>
</dbReference>
<dbReference type="SMR" id="Q9F187"/>
<dbReference type="UniPathway" id="UPA00051">
    <property type="reaction ID" value="UER00082"/>
</dbReference>
<dbReference type="GO" id="GO:0003871">
    <property type="term" value="F:5-methyltetrahydropteroyltriglutamate-homocysteine S-methyltransferase activity"/>
    <property type="evidence" value="ECO:0007669"/>
    <property type="project" value="UniProtKB-UniRule"/>
</dbReference>
<dbReference type="GO" id="GO:0008270">
    <property type="term" value="F:zinc ion binding"/>
    <property type="evidence" value="ECO:0007669"/>
    <property type="project" value="InterPro"/>
</dbReference>
<dbReference type="GO" id="GO:0009086">
    <property type="term" value="P:methionine biosynthetic process"/>
    <property type="evidence" value="ECO:0007669"/>
    <property type="project" value="UniProtKB-UniRule"/>
</dbReference>
<dbReference type="GO" id="GO:0032259">
    <property type="term" value="P:methylation"/>
    <property type="evidence" value="ECO:0007669"/>
    <property type="project" value="UniProtKB-KW"/>
</dbReference>
<dbReference type="CDD" id="cd03311">
    <property type="entry name" value="CIMS_C_terminal_like"/>
    <property type="match status" value="1"/>
</dbReference>
<dbReference type="CDD" id="cd03312">
    <property type="entry name" value="CIMS_N_terminal_like"/>
    <property type="match status" value="1"/>
</dbReference>
<dbReference type="FunFam" id="3.20.20.210:FF:000002">
    <property type="entry name" value="5-methyltetrahydropteroyltriglutamate--homocysteine methyltransferase"/>
    <property type="match status" value="1"/>
</dbReference>
<dbReference type="Gene3D" id="3.20.20.210">
    <property type="match status" value="2"/>
</dbReference>
<dbReference type="HAMAP" id="MF_00172">
    <property type="entry name" value="Meth_synth"/>
    <property type="match status" value="1"/>
</dbReference>
<dbReference type="InterPro" id="IPR013215">
    <property type="entry name" value="Cbl-indep_Met_Synth_N"/>
</dbReference>
<dbReference type="InterPro" id="IPR006276">
    <property type="entry name" value="Cobalamin-indep_Met_synthase"/>
</dbReference>
<dbReference type="InterPro" id="IPR002629">
    <property type="entry name" value="Met_Synth_C/arc"/>
</dbReference>
<dbReference type="InterPro" id="IPR038071">
    <property type="entry name" value="UROD/MetE-like_sf"/>
</dbReference>
<dbReference type="NCBIfam" id="TIGR01371">
    <property type="entry name" value="met_syn_B12ind"/>
    <property type="match status" value="1"/>
</dbReference>
<dbReference type="NCBIfam" id="NF003556">
    <property type="entry name" value="PRK05222.1"/>
    <property type="match status" value="1"/>
</dbReference>
<dbReference type="PANTHER" id="PTHR30519">
    <property type="entry name" value="5-METHYLTETRAHYDROPTEROYLTRIGLUTAMATE--HOMOCYSTEINE METHYLTRANSFERASE"/>
    <property type="match status" value="1"/>
</dbReference>
<dbReference type="Pfam" id="PF08267">
    <property type="entry name" value="Meth_synt_1"/>
    <property type="match status" value="1"/>
</dbReference>
<dbReference type="Pfam" id="PF01717">
    <property type="entry name" value="Meth_synt_2"/>
    <property type="match status" value="1"/>
</dbReference>
<dbReference type="PIRSF" id="PIRSF000382">
    <property type="entry name" value="MeTrfase_B12_ind"/>
    <property type="match status" value="1"/>
</dbReference>
<dbReference type="SUPFAM" id="SSF51726">
    <property type="entry name" value="UROD/MetE-like"/>
    <property type="match status" value="2"/>
</dbReference>
<accession>Q9F187</accession>
<feature type="chain" id="PRO_0000098607" description="5-methyltetrahydropteroyltriglutamate--homocysteine methyltransferase">
    <location>
        <begin position="1"/>
        <end position="792"/>
    </location>
</feature>
<feature type="active site" description="Proton donor" evidence="1">
    <location>
        <position position="695"/>
    </location>
</feature>
<feature type="binding site" evidence="1">
    <location>
        <begin position="16"/>
        <end position="19"/>
    </location>
    <ligand>
        <name>5-methyltetrahydropteroyltri-L-glutamate</name>
        <dbReference type="ChEBI" id="CHEBI:58207"/>
    </ligand>
</feature>
<feature type="binding site" evidence="1">
    <location>
        <position position="112"/>
    </location>
    <ligand>
        <name>5-methyltetrahydropteroyltri-L-glutamate</name>
        <dbReference type="ChEBI" id="CHEBI:58207"/>
    </ligand>
</feature>
<feature type="binding site" evidence="1">
    <location>
        <begin position="432"/>
        <end position="434"/>
    </location>
    <ligand>
        <name>L-homocysteine</name>
        <dbReference type="ChEBI" id="CHEBI:58199"/>
    </ligand>
</feature>
<feature type="binding site" evidence="1">
    <location>
        <begin position="432"/>
        <end position="434"/>
    </location>
    <ligand>
        <name>L-methionine</name>
        <dbReference type="ChEBI" id="CHEBI:57844"/>
    </ligand>
</feature>
<feature type="binding site" evidence="1">
    <location>
        <position position="485"/>
    </location>
    <ligand>
        <name>L-homocysteine</name>
        <dbReference type="ChEBI" id="CHEBI:58199"/>
    </ligand>
</feature>
<feature type="binding site" evidence="1">
    <location>
        <position position="485"/>
    </location>
    <ligand>
        <name>L-methionine</name>
        <dbReference type="ChEBI" id="CHEBI:57844"/>
    </ligand>
</feature>
<feature type="binding site" evidence="1">
    <location>
        <begin position="516"/>
        <end position="517"/>
    </location>
    <ligand>
        <name>5-methyltetrahydropteroyltri-L-glutamate</name>
        <dbReference type="ChEBI" id="CHEBI:58207"/>
    </ligand>
</feature>
<feature type="binding site" evidence="1">
    <location>
        <position position="562"/>
    </location>
    <ligand>
        <name>5-methyltetrahydropteroyltri-L-glutamate</name>
        <dbReference type="ChEBI" id="CHEBI:58207"/>
    </ligand>
</feature>
<feature type="binding site" evidence="1">
    <location>
        <position position="600"/>
    </location>
    <ligand>
        <name>L-homocysteine</name>
        <dbReference type="ChEBI" id="CHEBI:58199"/>
    </ligand>
</feature>
<feature type="binding site" evidence="1">
    <location>
        <position position="600"/>
    </location>
    <ligand>
        <name>L-methionine</name>
        <dbReference type="ChEBI" id="CHEBI:57844"/>
    </ligand>
</feature>
<feature type="binding site" evidence="1">
    <location>
        <position position="606"/>
    </location>
    <ligand>
        <name>5-methyltetrahydropteroyltri-L-glutamate</name>
        <dbReference type="ChEBI" id="CHEBI:58207"/>
    </ligand>
</feature>
<feature type="binding site" evidence="1">
    <location>
        <position position="642"/>
    </location>
    <ligand>
        <name>Zn(2+)</name>
        <dbReference type="ChEBI" id="CHEBI:29105"/>
        <note>catalytic</note>
    </ligand>
</feature>
<feature type="binding site" evidence="1">
    <location>
        <position position="644"/>
    </location>
    <ligand>
        <name>Zn(2+)</name>
        <dbReference type="ChEBI" id="CHEBI:29105"/>
        <note>catalytic</note>
    </ligand>
</feature>
<feature type="binding site" evidence="1">
    <location>
        <position position="666"/>
    </location>
    <ligand>
        <name>Zn(2+)</name>
        <dbReference type="ChEBI" id="CHEBI:29105"/>
        <note>catalytic</note>
    </ligand>
</feature>
<feature type="binding site" evidence="1">
    <location>
        <position position="727"/>
    </location>
    <ligand>
        <name>Zn(2+)</name>
        <dbReference type="ChEBI" id="CHEBI:29105"/>
        <note>catalytic</note>
    </ligand>
</feature>
<gene>
    <name evidence="1" type="primary">metE</name>
</gene>
<protein>
    <recommendedName>
        <fullName evidence="1">5-methyltetrahydropteroyltriglutamate--homocysteine methyltransferase</fullName>
        <ecNumber evidence="1">2.1.1.14</ecNumber>
    </recommendedName>
    <alternativeName>
        <fullName evidence="1">Cobalamin-independent methionine synthase</fullName>
    </alternativeName>
    <alternativeName>
        <fullName evidence="1">Methionine synthase, vitamin-B12 independent isozyme</fullName>
    </alternativeName>
</protein>
<organism>
    <name type="scientific">Cupriavidus necator</name>
    <name type="common">Alcaligenes eutrophus</name>
    <name type="synonym">Ralstonia eutropha</name>
    <dbReference type="NCBI Taxonomy" id="106590"/>
    <lineage>
        <taxon>Bacteria</taxon>
        <taxon>Pseudomonadati</taxon>
        <taxon>Pseudomonadota</taxon>
        <taxon>Betaproteobacteria</taxon>
        <taxon>Burkholderiales</taxon>
        <taxon>Burkholderiaceae</taxon>
        <taxon>Cupriavidus</taxon>
    </lineage>
</organism>
<proteinExistence type="inferred from homology"/>
<evidence type="ECO:0000255" key="1">
    <source>
        <dbReference type="HAMAP-Rule" id="MF_00172"/>
    </source>
</evidence>
<name>METE_CUPNE</name>
<reference key="1">
    <citation type="submission" date="1998-01" db="EMBL/GenBank/DDBJ databases">
        <title>Characterization of a second gene cluster coding for enzymes of catechol catabolism in Ralstonia eutropha 335T.</title>
        <authorList>
            <person name="Hinner I.-S."/>
            <person name="Buerger S."/>
            <person name="Schloemann M."/>
        </authorList>
    </citation>
    <scope>NUCLEOTIDE SEQUENCE [GENOMIC DNA]</scope>
    <source>
        <strain>ATCC 17697 / DSM 531 / 335</strain>
    </source>
</reference>
<comment type="function">
    <text evidence="1">Catalyzes the transfer of a methyl group from 5-methyltetrahydrofolate to homocysteine resulting in methionine formation.</text>
</comment>
<comment type="catalytic activity">
    <reaction evidence="1">
        <text>5-methyltetrahydropteroyltri-L-glutamate + L-homocysteine = tetrahydropteroyltri-L-glutamate + L-methionine</text>
        <dbReference type="Rhea" id="RHEA:21196"/>
        <dbReference type="ChEBI" id="CHEBI:57844"/>
        <dbReference type="ChEBI" id="CHEBI:58140"/>
        <dbReference type="ChEBI" id="CHEBI:58199"/>
        <dbReference type="ChEBI" id="CHEBI:58207"/>
        <dbReference type="EC" id="2.1.1.14"/>
    </reaction>
</comment>
<comment type="cofactor">
    <cofactor evidence="1">
        <name>Zn(2+)</name>
        <dbReference type="ChEBI" id="CHEBI:29105"/>
    </cofactor>
    <text evidence="1">Binds 1 zinc ion per subunit.</text>
</comment>
<comment type="pathway">
    <text evidence="1">Amino-acid biosynthesis; L-methionine biosynthesis via de novo pathway; L-methionine from L-homocysteine (MetE route): step 1/1.</text>
</comment>
<comment type="similarity">
    <text evidence="1">Belongs to the vitamin-B12 independent methionine synthase family.</text>
</comment>